<keyword id="KW-0002">3D-structure</keyword>
<keyword id="KW-0106">Calcium</keyword>
<keyword id="KW-0167">Capsid protein</keyword>
<keyword id="KW-1185">Reference proteome</keyword>
<keyword id="KW-0694">RNA-binding</keyword>
<keyword id="KW-1142">T=3 icosahedral capsid protein</keyword>
<keyword id="KW-0946">Virion</keyword>
<name>CAPSD_MNSV</name>
<proteinExistence type="evidence at protein level"/>
<dbReference type="EMBL" id="M29671">
    <property type="protein sequence ID" value="AAB02435.1"/>
    <property type="molecule type" value="Genomic_RNA"/>
</dbReference>
<dbReference type="EMBL" id="D00562">
    <property type="protein sequence ID" value="BAA00436.1"/>
    <property type="molecule type" value="Genomic_RNA"/>
</dbReference>
<dbReference type="EMBL" id="D12536">
    <property type="protein sequence ID" value="BAA02104.1"/>
    <property type="molecule type" value="Genomic_RNA"/>
</dbReference>
<dbReference type="PIR" id="JQ0169">
    <property type="entry name" value="VCVEMN"/>
</dbReference>
<dbReference type="PDB" id="2ZAH">
    <property type="method" value="X-ray"/>
    <property type="resolution" value="2.81 A"/>
    <property type="chains" value="A/B/C=60-390"/>
</dbReference>
<dbReference type="PDBsum" id="2ZAH"/>
<dbReference type="SMR" id="P19899"/>
<dbReference type="KEGG" id="vg:1491981"/>
<dbReference type="OrthoDB" id="10131at10239"/>
<dbReference type="EvolutionaryTrace" id="P19899"/>
<dbReference type="Proteomes" id="UP000202003">
    <property type="component" value="Genome"/>
</dbReference>
<dbReference type="GO" id="GO:0039617">
    <property type="term" value="C:T=3 icosahedral viral capsid"/>
    <property type="evidence" value="ECO:0007669"/>
    <property type="project" value="UniProtKB-KW"/>
</dbReference>
<dbReference type="GO" id="GO:0003723">
    <property type="term" value="F:RNA binding"/>
    <property type="evidence" value="ECO:0007669"/>
    <property type="project" value="UniProtKB-KW"/>
</dbReference>
<dbReference type="GO" id="GO:0005198">
    <property type="term" value="F:structural molecule activity"/>
    <property type="evidence" value="ECO:0007669"/>
    <property type="project" value="InterPro"/>
</dbReference>
<dbReference type="Gene3D" id="2.60.120.20">
    <property type="match status" value="1"/>
</dbReference>
<dbReference type="Gene3D" id="2.60.40.4030">
    <property type="match status" value="1"/>
</dbReference>
<dbReference type="InterPro" id="IPR000937">
    <property type="entry name" value="Capsid_prot_S-dom_vir"/>
</dbReference>
<dbReference type="InterPro" id="IPR029053">
    <property type="entry name" value="Viral_coat"/>
</dbReference>
<dbReference type="Pfam" id="PF00729">
    <property type="entry name" value="Viral_coat"/>
    <property type="match status" value="1"/>
</dbReference>
<dbReference type="PRINTS" id="PR00233">
    <property type="entry name" value="ICOSAHEDRAL"/>
</dbReference>
<dbReference type="SUPFAM" id="SSF88633">
    <property type="entry name" value="Positive stranded ssRNA viruses"/>
    <property type="match status" value="1"/>
</dbReference>
<dbReference type="PROSITE" id="PS00555">
    <property type="entry name" value="ICOSAH_VIR_COAT_S"/>
    <property type="match status" value="1"/>
</dbReference>
<organismHost>
    <name type="scientific">Cucumis melo</name>
    <name type="common">Muskmelon</name>
    <dbReference type="NCBI Taxonomy" id="3656"/>
</organismHost>
<organismHost>
    <name type="scientific">Cucumis sativus</name>
    <name type="common">Cucumber</name>
    <dbReference type="NCBI Taxonomy" id="3659"/>
</organismHost>
<accession>P19899</accession>
<reference key="1">
    <citation type="journal article" date="1989" name="J. Gen. Virol.">
        <title>Coat protein of melon necrotic spot carmovirus is more similar to those of tombusviruses than those of carmoviruses.</title>
        <authorList>
            <person name="Riviere C.J."/>
            <person name="Pot J."/>
            <person name="Tremaine J.H."/>
            <person name="Rochon D.M."/>
        </authorList>
    </citation>
    <scope>NUCLEOTIDE SEQUENCE [GENOMIC RNA]</scope>
</reference>
<reference key="2">
    <citation type="journal article" date="1990" name="J. Gen. Virol.">
        <title>Nucleotide sequence and genomic organization of melon necrotic spot virus.</title>
        <authorList>
            <person name="Riviere C.J."/>
            <person name="Rochon D.M."/>
        </authorList>
    </citation>
    <scope>NUCLEOTIDE SEQUENCE [GENOMIC RNA]</scope>
</reference>
<reference key="3">
    <citation type="journal article" date="2008" name="Acta Crystallogr. F">
        <title>The structure of melon necrotic spot virus determined at 2.8 A resolution.</title>
        <authorList>
            <person name="Wada Y."/>
            <person name="Tanaka H."/>
            <person name="Yamashita E."/>
            <person name="Kubo C."/>
            <person name="Ichiki-Uehara T."/>
            <person name="Nakazono-Nagaoka E."/>
            <person name="Omura T."/>
            <person name="Tsukihara T."/>
        </authorList>
    </citation>
    <scope>X-RAY CRYSTALLOGRAPHY (2.81 ANGSTROMS) OF 60-390</scope>
    <source>
        <strain>KS</strain>
    </source>
</reference>
<gene>
    <name type="ORF">ORF4</name>
</gene>
<organism>
    <name type="scientific">Melon necrotic spot virus</name>
    <name type="common">MNSV</name>
    <dbReference type="NCBI Taxonomy" id="11987"/>
    <lineage>
        <taxon>Viruses</taxon>
        <taxon>Riboviria</taxon>
        <taxon>Orthornavirae</taxon>
        <taxon>Kitrinoviricota</taxon>
        <taxon>Tolucaviricetes</taxon>
        <taxon>Tolivirales</taxon>
        <taxon>Tombusviridae</taxon>
        <taxon>Procedovirinae</taxon>
        <taxon>Gammacarmovirus</taxon>
        <taxon>Gammacarmovirus melonis</taxon>
    </lineage>
</organism>
<comment type="function">
    <text evidence="1">Capsid protein self-assembles to form an icosahedral capsid with a T=3 symmetry, about 32-35 nm in diameter, and consisting of 180 capsid proteins. Also acts as a suppressor of RNA-mediated gene silencing, also known as post-transcriptional gene silencing (PTGS), a mechanism of plant viral defense that limits the accumulation of viral RNAs (By similarity).</text>
</comment>
<comment type="cofactor">
    <cofactor>
        <name>Ca(2+)</name>
        <dbReference type="ChEBI" id="CHEBI:29108"/>
    </cofactor>
    <text>Binds 4 Ca(2+) ions per icosahedral asymmetric unit, itself composed of three capsid protein subunits. Ca(2+) ions probably promote virus assembly and stabilize the virus particle.</text>
</comment>
<comment type="subunit">
    <text evidence="1">Homodimer. Homomultimer.</text>
</comment>
<comment type="subcellular location">
    <subcellularLocation>
        <location evidence="1">Virion</location>
    </subcellularLocation>
</comment>
<comment type="similarity">
    <text evidence="2">Belongs to the icosahedral plant coat protein family.</text>
</comment>
<sequence>MAMVKRINNLPTVKLAKQALPLLANPKLVNKAIDVVPLVVQGGRKLSKAAKRLLGAYGGNISYTEGAKPGAISAPVAISRRVAGMKPRFVRSEGSVKIVHREFIASVLPSSDLTVNNGDVNIGKYRVNPSNNALFTWLQGQAQLYDMYRFTRLRITYIPTTGSTSTGRVSLLWDRDSQDPLPIDRAAISSYAHSADSAPWAENVLVVPCDNTWRYMNDTNAVDRKLVDFGQFLFATYSGAGSTAHGDLYVEYAVEFKDPQPIAGMVCMFDRLVSLSEVGSTIKGVNYIADRDVITTGGNIGVNINIPGTYLVTIVLNATSIGPLTFTGNSKLVGNSLNLTSSGASALTFTLNSTGVPNSSDSSFSVGTVVALTRVRMTITRCSPETAYLA</sequence>
<feature type="chain" id="PRO_0000222864" description="Capsid protein">
    <location>
        <begin position="1"/>
        <end position="390"/>
    </location>
</feature>
<feature type="region of interest" description="S domain, virion shell">
    <location>
        <begin position="95"/>
        <end position="256"/>
    </location>
</feature>
<feature type="region of interest" description="P domain, projecting">
    <location>
        <begin position="257"/>
        <end position="390"/>
    </location>
</feature>
<feature type="strand" evidence="3">
    <location>
        <begin position="88"/>
        <end position="90"/>
    </location>
</feature>
<feature type="strand" evidence="3">
    <location>
        <begin position="96"/>
        <end position="107"/>
    </location>
</feature>
<feature type="helix" evidence="3">
    <location>
        <begin position="116"/>
        <end position="118"/>
    </location>
</feature>
<feature type="turn" evidence="3">
    <location>
        <begin position="122"/>
        <end position="124"/>
    </location>
</feature>
<feature type="strand" evidence="3">
    <location>
        <begin position="125"/>
        <end position="127"/>
    </location>
</feature>
<feature type="turn" evidence="3">
    <location>
        <begin position="132"/>
        <end position="134"/>
    </location>
</feature>
<feature type="turn" evidence="3">
    <location>
        <begin position="136"/>
        <end position="138"/>
    </location>
</feature>
<feature type="helix" evidence="3">
    <location>
        <begin position="139"/>
        <end position="142"/>
    </location>
</feature>
<feature type="strand" evidence="3">
    <location>
        <begin position="145"/>
        <end position="159"/>
    </location>
</feature>
<feature type="strand" evidence="3">
    <location>
        <begin position="168"/>
        <end position="175"/>
    </location>
</feature>
<feature type="helix" evidence="3">
    <location>
        <begin position="185"/>
        <end position="188"/>
    </location>
</feature>
<feature type="strand" evidence="3">
    <location>
        <begin position="192"/>
        <end position="197"/>
    </location>
</feature>
<feature type="strand" evidence="3">
    <location>
        <begin position="203"/>
        <end position="207"/>
    </location>
</feature>
<feature type="helix" evidence="3">
    <location>
        <begin position="224"/>
        <end position="226"/>
    </location>
</feature>
<feature type="strand" evidence="3">
    <location>
        <begin position="231"/>
        <end position="238"/>
    </location>
</feature>
<feature type="strand" evidence="3">
    <location>
        <begin position="241"/>
        <end position="243"/>
    </location>
</feature>
<feature type="strand" evidence="3">
    <location>
        <begin position="246"/>
        <end position="256"/>
    </location>
</feature>
<feature type="strand" evidence="3">
    <location>
        <begin position="265"/>
        <end position="271"/>
    </location>
</feature>
<feature type="turn" evidence="3">
    <location>
        <begin position="273"/>
        <end position="275"/>
    </location>
</feature>
<feature type="strand" evidence="3">
    <location>
        <begin position="281"/>
        <end position="285"/>
    </location>
</feature>
<feature type="helix" evidence="3">
    <location>
        <begin position="290"/>
        <end position="292"/>
    </location>
</feature>
<feature type="strand" evidence="3">
    <location>
        <begin position="293"/>
        <end position="296"/>
    </location>
</feature>
<feature type="strand" evidence="3">
    <location>
        <begin position="299"/>
        <end position="302"/>
    </location>
</feature>
<feature type="strand" evidence="3">
    <location>
        <begin position="308"/>
        <end position="320"/>
    </location>
</feature>
<feature type="strand" evidence="3">
    <location>
        <begin position="328"/>
        <end position="341"/>
    </location>
</feature>
<feature type="strand" evidence="3">
    <location>
        <begin position="344"/>
        <end position="353"/>
    </location>
</feature>
<feature type="strand" evidence="3">
    <location>
        <begin position="359"/>
        <end position="361"/>
    </location>
</feature>
<feature type="strand" evidence="3">
    <location>
        <begin position="363"/>
        <end position="366"/>
    </location>
</feature>
<feature type="strand" evidence="3">
    <location>
        <begin position="374"/>
        <end position="382"/>
    </location>
</feature>
<feature type="helix" evidence="3">
    <location>
        <begin position="384"/>
        <end position="386"/>
    </location>
</feature>
<protein>
    <recommendedName>
        <fullName>Capsid protein</fullName>
    </recommendedName>
    <alternativeName>
        <fullName>Coat protein</fullName>
    </alternativeName>
    <alternativeName>
        <fullName>p42</fullName>
    </alternativeName>
</protein>
<evidence type="ECO:0000250" key="1"/>
<evidence type="ECO:0000305" key="2"/>
<evidence type="ECO:0007829" key="3">
    <source>
        <dbReference type="PDB" id="2ZAH"/>
    </source>
</evidence>